<name>PURA_NOSS1</name>
<feature type="chain" id="PRO_0000095141" description="Adenylosuccinate synthetase">
    <location>
        <begin position="1"/>
        <end position="447"/>
    </location>
</feature>
<feature type="active site" description="Proton acceptor" evidence="1">
    <location>
        <position position="13"/>
    </location>
</feature>
<feature type="active site" description="Proton donor" evidence="1">
    <location>
        <position position="41"/>
    </location>
</feature>
<feature type="binding site" evidence="1">
    <location>
        <begin position="12"/>
        <end position="18"/>
    </location>
    <ligand>
        <name>GTP</name>
        <dbReference type="ChEBI" id="CHEBI:37565"/>
    </ligand>
</feature>
<feature type="binding site" description="in other chain" evidence="1">
    <location>
        <begin position="13"/>
        <end position="16"/>
    </location>
    <ligand>
        <name>IMP</name>
        <dbReference type="ChEBI" id="CHEBI:58053"/>
        <note>ligand shared between dimeric partners</note>
    </ligand>
</feature>
<feature type="binding site" evidence="1">
    <location>
        <position position="13"/>
    </location>
    <ligand>
        <name>Mg(2+)</name>
        <dbReference type="ChEBI" id="CHEBI:18420"/>
    </ligand>
</feature>
<feature type="binding site" description="in other chain" evidence="1">
    <location>
        <begin position="38"/>
        <end position="41"/>
    </location>
    <ligand>
        <name>IMP</name>
        <dbReference type="ChEBI" id="CHEBI:58053"/>
        <note>ligand shared between dimeric partners</note>
    </ligand>
</feature>
<feature type="binding site" evidence="1">
    <location>
        <begin position="40"/>
        <end position="42"/>
    </location>
    <ligand>
        <name>GTP</name>
        <dbReference type="ChEBI" id="CHEBI:37565"/>
    </ligand>
</feature>
<feature type="binding site" evidence="1">
    <location>
        <position position="40"/>
    </location>
    <ligand>
        <name>Mg(2+)</name>
        <dbReference type="ChEBI" id="CHEBI:18420"/>
    </ligand>
</feature>
<feature type="binding site" description="in other chain" evidence="1">
    <location>
        <position position="128"/>
    </location>
    <ligand>
        <name>IMP</name>
        <dbReference type="ChEBI" id="CHEBI:58053"/>
        <note>ligand shared between dimeric partners</note>
    </ligand>
</feature>
<feature type="binding site" evidence="1">
    <location>
        <position position="142"/>
    </location>
    <ligand>
        <name>IMP</name>
        <dbReference type="ChEBI" id="CHEBI:58053"/>
        <note>ligand shared between dimeric partners</note>
    </ligand>
</feature>
<feature type="binding site" description="in other chain" evidence="1">
    <location>
        <position position="223"/>
    </location>
    <ligand>
        <name>IMP</name>
        <dbReference type="ChEBI" id="CHEBI:58053"/>
        <note>ligand shared between dimeric partners</note>
    </ligand>
</feature>
<feature type="binding site" description="in other chain" evidence="1">
    <location>
        <position position="238"/>
    </location>
    <ligand>
        <name>IMP</name>
        <dbReference type="ChEBI" id="CHEBI:58053"/>
        <note>ligand shared between dimeric partners</note>
    </ligand>
</feature>
<feature type="binding site" evidence="1">
    <location>
        <begin position="298"/>
        <end position="304"/>
    </location>
    <ligand>
        <name>substrate</name>
    </ligand>
</feature>
<feature type="binding site" description="in other chain" evidence="1">
    <location>
        <position position="302"/>
    </location>
    <ligand>
        <name>IMP</name>
        <dbReference type="ChEBI" id="CHEBI:58053"/>
        <note>ligand shared between dimeric partners</note>
    </ligand>
</feature>
<feature type="binding site" evidence="1">
    <location>
        <position position="304"/>
    </location>
    <ligand>
        <name>GTP</name>
        <dbReference type="ChEBI" id="CHEBI:37565"/>
    </ligand>
</feature>
<feature type="binding site" evidence="1">
    <location>
        <begin position="330"/>
        <end position="332"/>
    </location>
    <ligand>
        <name>GTP</name>
        <dbReference type="ChEBI" id="CHEBI:37565"/>
    </ligand>
</feature>
<feature type="binding site" evidence="1">
    <location>
        <begin position="412"/>
        <end position="414"/>
    </location>
    <ligand>
        <name>GTP</name>
        <dbReference type="ChEBI" id="CHEBI:37565"/>
    </ligand>
</feature>
<gene>
    <name evidence="1" type="primary">purA</name>
    <name type="ordered locus">alr4784</name>
</gene>
<accession>Q8YMZ0</accession>
<proteinExistence type="inferred from homology"/>
<dbReference type="EC" id="6.3.4.4" evidence="1"/>
<dbReference type="EMBL" id="BA000019">
    <property type="protein sequence ID" value="BAB76483.1"/>
    <property type="status" value="ALT_INIT"/>
    <property type="molecule type" value="Genomic_DNA"/>
</dbReference>
<dbReference type="PIR" id="AH2403">
    <property type="entry name" value="AH2403"/>
</dbReference>
<dbReference type="RefSeq" id="WP_044522336.1">
    <property type="nucleotide sequence ID" value="NZ_RSCN01000035.1"/>
</dbReference>
<dbReference type="SMR" id="Q8YMZ0"/>
<dbReference type="STRING" id="103690.gene:10496837"/>
<dbReference type="KEGG" id="ana:alr4784"/>
<dbReference type="eggNOG" id="COG0104">
    <property type="taxonomic scope" value="Bacteria"/>
</dbReference>
<dbReference type="OrthoDB" id="9807553at2"/>
<dbReference type="UniPathway" id="UPA00075">
    <property type="reaction ID" value="UER00335"/>
</dbReference>
<dbReference type="Proteomes" id="UP000002483">
    <property type="component" value="Chromosome"/>
</dbReference>
<dbReference type="GO" id="GO:0005737">
    <property type="term" value="C:cytoplasm"/>
    <property type="evidence" value="ECO:0007669"/>
    <property type="project" value="UniProtKB-SubCell"/>
</dbReference>
<dbReference type="GO" id="GO:0004019">
    <property type="term" value="F:adenylosuccinate synthase activity"/>
    <property type="evidence" value="ECO:0007669"/>
    <property type="project" value="UniProtKB-UniRule"/>
</dbReference>
<dbReference type="GO" id="GO:0005525">
    <property type="term" value="F:GTP binding"/>
    <property type="evidence" value="ECO:0007669"/>
    <property type="project" value="UniProtKB-UniRule"/>
</dbReference>
<dbReference type="GO" id="GO:0000287">
    <property type="term" value="F:magnesium ion binding"/>
    <property type="evidence" value="ECO:0007669"/>
    <property type="project" value="UniProtKB-UniRule"/>
</dbReference>
<dbReference type="GO" id="GO:0044208">
    <property type="term" value="P:'de novo' AMP biosynthetic process"/>
    <property type="evidence" value="ECO:0007669"/>
    <property type="project" value="UniProtKB-UniRule"/>
</dbReference>
<dbReference type="GO" id="GO:0046040">
    <property type="term" value="P:IMP metabolic process"/>
    <property type="evidence" value="ECO:0007669"/>
    <property type="project" value="TreeGrafter"/>
</dbReference>
<dbReference type="CDD" id="cd03108">
    <property type="entry name" value="AdSS"/>
    <property type="match status" value="1"/>
</dbReference>
<dbReference type="FunFam" id="1.10.300.10:FF:000001">
    <property type="entry name" value="Adenylosuccinate synthetase"/>
    <property type="match status" value="1"/>
</dbReference>
<dbReference type="FunFam" id="3.90.170.10:FF:000001">
    <property type="entry name" value="Adenylosuccinate synthetase"/>
    <property type="match status" value="1"/>
</dbReference>
<dbReference type="Gene3D" id="3.40.440.10">
    <property type="entry name" value="Adenylosuccinate Synthetase, subunit A, domain 1"/>
    <property type="match status" value="1"/>
</dbReference>
<dbReference type="Gene3D" id="1.10.300.10">
    <property type="entry name" value="Adenylosuccinate Synthetase, subunit A, domain 2"/>
    <property type="match status" value="1"/>
</dbReference>
<dbReference type="Gene3D" id="3.90.170.10">
    <property type="entry name" value="Adenylosuccinate Synthetase, subunit A, domain 3"/>
    <property type="match status" value="1"/>
</dbReference>
<dbReference type="HAMAP" id="MF_00011">
    <property type="entry name" value="Adenylosucc_synth"/>
    <property type="match status" value="1"/>
</dbReference>
<dbReference type="InterPro" id="IPR018220">
    <property type="entry name" value="Adenylosuccin_syn_GTP-bd"/>
</dbReference>
<dbReference type="InterPro" id="IPR033128">
    <property type="entry name" value="Adenylosuccin_syn_Lys_AS"/>
</dbReference>
<dbReference type="InterPro" id="IPR042109">
    <property type="entry name" value="Adenylosuccinate_synth_dom1"/>
</dbReference>
<dbReference type="InterPro" id="IPR042110">
    <property type="entry name" value="Adenylosuccinate_synth_dom2"/>
</dbReference>
<dbReference type="InterPro" id="IPR042111">
    <property type="entry name" value="Adenylosuccinate_synth_dom3"/>
</dbReference>
<dbReference type="InterPro" id="IPR001114">
    <property type="entry name" value="Adenylosuccinate_synthetase"/>
</dbReference>
<dbReference type="InterPro" id="IPR027417">
    <property type="entry name" value="P-loop_NTPase"/>
</dbReference>
<dbReference type="NCBIfam" id="NF002223">
    <property type="entry name" value="PRK01117.1"/>
    <property type="match status" value="1"/>
</dbReference>
<dbReference type="NCBIfam" id="TIGR00184">
    <property type="entry name" value="purA"/>
    <property type="match status" value="1"/>
</dbReference>
<dbReference type="PANTHER" id="PTHR11846">
    <property type="entry name" value="ADENYLOSUCCINATE SYNTHETASE"/>
    <property type="match status" value="1"/>
</dbReference>
<dbReference type="PANTHER" id="PTHR11846:SF0">
    <property type="entry name" value="ADENYLOSUCCINATE SYNTHETASE"/>
    <property type="match status" value="1"/>
</dbReference>
<dbReference type="Pfam" id="PF00709">
    <property type="entry name" value="Adenylsucc_synt"/>
    <property type="match status" value="1"/>
</dbReference>
<dbReference type="SMART" id="SM00788">
    <property type="entry name" value="Adenylsucc_synt"/>
    <property type="match status" value="1"/>
</dbReference>
<dbReference type="SUPFAM" id="SSF52540">
    <property type="entry name" value="P-loop containing nucleoside triphosphate hydrolases"/>
    <property type="match status" value="1"/>
</dbReference>
<dbReference type="PROSITE" id="PS01266">
    <property type="entry name" value="ADENYLOSUCCIN_SYN_1"/>
    <property type="match status" value="1"/>
</dbReference>
<dbReference type="PROSITE" id="PS00513">
    <property type="entry name" value="ADENYLOSUCCIN_SYN_2"/>
    <property type="match status" value="1"/>
</dbReference>
<sequence length="447" mass="49206">MANVIVIGAQWGDEGKGKITDLLSRSADVVVRYQGGVNAGHTIVVKGQTFKLHLIPSGILYPDTECMIGCGTVIDPQVLIKELDQLESLNISTKNLLISETAHVTMPYHRLIDKASEERRGSHKIGTTGRGIGPTYADKSERTGIRVLDLMDPAALRDQLEWTINNKNVILEKLYNLPPLDTEEVIQEYIGYAERLRPHVVDTSLKIYDAIQRRRNILFEGAQGTLLDLDHGTYPYVTSSNPVAGGACVGTGLGPTMIDRVIGVSKAYTTRVGEGPFPTELHGELGELLCDRGAEFGTTTGRKRRCGWFDAVIGRYAVRINGMDCMAITKLDVLDELEEIQVCIAYEIDGDRCDHFPTSARQFARCRPIYKTVPGWQVPTSECRTLEDLPQQALDYLKFLAELMEVPIAIVSLGASRDQTIIVEDPIHGPKRALLHPDGTPASLLSA</sequence>
<reference key="1">
    <citation type="journal article" date="2001" name="DNA Res.">
        <title>Complete genomic sequence of the filamentous nitrogen-fixing cyanobacterium Anabaena sp. strain PCC 7120.</title>
        <authorList>
            <person name="Kaneko T."/>
            <person name="Nakamura Y."/>
            <person name="Wolk C.P."/>
            <person name="Kuritz T."/>
            <person name="Sasamoto S."/>
            <person name="Watanabe A."/>
            <person name="Iriguchi M."/>
            <person name="Ishikawa A."/>
            <person name="Kawashima K."/>
            <person name="Kimura T."/>
            <person name="Kishida Y."/>
            <person name="Kohara M."/>
            <person name="Matsumoto M."/>
            <person name="Matsuno A."/>
            <person name="Muraki A."/>
            <person name="Nakazaki N."/>
            <person name="Shimpo S."/>
            <person name="Sugimoto M."/>
            <person name="Takazawa M."/>
            <person name="Yamada M."/>
            <person name="Yasuda M."/>
            <person name="Tabata S."/>
        </authorList>
    </citation>
    <scope>NUCLEOTIDE SEQUENCE [LARGE SCALE GENOMIC DNA]</scope>
    <source>
        <strain>PCC 7120 / SAG 25.82 / UTEX 2576</strain>
    </source>
</reference>
<keyword id="KW-0963">Cytoplasm</keyword>
<keyword id="KW-0342">GTP-binding</keyword>
<keyword id="KW-0436">Ligase</keyword>
<keyword id="KW-0460">Magnesium</keyword>
<keyword id="KW-0479">Metal-binding</keyword>
<keyword id="KW-0547">Nucleotide-binding</keyword>
<keyword id="KW-0658">Purine biosynthesis</keyword>
<keyword id="KW-1185">Reference proteome</keyword>
<organism>
    <name type="scientific">Nostoc sp. (strain PCC 7120 / SAG 25.82 / UTEX 2576)</name>
    <dbReference type="NCBI Taxonomy" id="103690"/>
    <lineage>
        <taxon>Bacteria</taxon>
        <taxon>Bacillati</taxon>
        <taxon>Cyanobacteriota</taxon>
        <taxon>Cyanophyceae</taxon>
        <taxon>Nostocales</taxon>
        <taxon>Nostocaceae</taxon>
        <taxon>Nostoc</taxon>
    </lineage>
</organism>
<protein>
    <recommendedName>
        <fullName evidence="1">Adenylosuccinate synthetase</fullName>
        <shortName evidence="1">AMPSase</shortName>
        <shortName evidence="1">AdSS</shortName>
        <ecNumber evidence="1">6.3.4.4</ecNumber>
    </recommendedName>
    <alternativeName>
        <fullName evidence="1">IMP--aspartate ligase</fullName>
    </alternativeName>
</protein>
<evidence type="ECO:0000255" key="1">
    <source>
        <dbReference type="HAMAP-Rule" id="MF_00011"/>
    </source>
</evidence>
<evidence type="ECO:0000305" key="2"/>
<comment type="function">
    <text evidence="1">Plays an important role in the de novo pathway of purine nucleotide biosynthesis. Catalyzes the first committed step in the biosynthesis of AMP from IMP.</text>
</comment>
<comment type="catalytic activity">
    <reaction evidence="1">
        <text>IMP + L-aspartate + GTP = N(6)-(1,2-dicarboxyethyl)-AMP + GDP + phosphate + 2 H(+)</text>
        <dbReference type="Rhea" id="RHEA:15753"/>
        <dbReference type="ChEBI" id="CHEBI:15378"/>
        <dbReference type="ChEBI" id="CHEBI:29991"/>
        <dbReference type="ChEBI" id="CHEBI:37565"/>
        <dbReference type="ChEBI" id="CHEBI:43474"/>
        <dbReference type="ChEBI" id="CHEBI:57567"/>
        <dbReference type="ChEBI" id="CHEBI:58053"/>
        <dbReference type="ChEBI" id="CHEBI:58189"/>
        <dbReference type="EC" id="6.3.4.4"/>
    </reaction>
</comment>
<comment type="cofactor">
    <cofactor evidence="1">
        <name>Mg(2+)</name>
        <dbReference type="ChEBI" id="CHEBI:18420"/>
    </cofactor>
    <text evidence="1">Binds 1 Mg(2+) ion per subunit.</text>
</comment>
<comment type="pathway">
    <text evidence="1">Purine metabolism; AMP biosynthesis via de novo pathway; AMP from IMP: step 1/2.</text>
</comment>
<comment type="subunit">
    <text evidence="1">Homodimer.</text>
</comment>
<comment type="subcellular location">
    <subcellularLocation>
        <location evidence="1">Cytoplasm</location>
    </subcellularLocation>
</comment>
<comment type="similarity">
    <text evidence="1">Belongs to the adenylosuccinate synthetase family.</text>
</comment>
<comment type="sequence caution" evidence="2">
    <conflict type="erroneous initiation">
        <sequence resource="EMBL-CDS" id="BAB76483"/>
    </conflict>
</comment>